<feature type="chain" id="PRO_0000437295" description="ustiloxin B cluster transcription factor ustR">
    <location>
        <begin position="1"/>
        <end position="588"/>
    </location>
</feature>
<feature type="DNA-binding region" description="Zn(2)-C6 fungal-type" evidence="1">
    <location>
        <begin position="11"/>
        <end position="38"/>
    </location>
</feature>
<feature type="region of interest" description="Disordered" evidence="2">
    <location>
        <begin position="68"/>
        <end position="92"/>
    </location>
</feature>
<evidence type="ECO:0000255" key="1">
    <source>
        <dbReference type="PROSITE-ProRule" id="PRU00227"/>
    </source>
</evidence>
<evidence type="ECO:0000256" key="2">
    <source>
        <dbReference type="SAM" id="MobiDB-lite"/>
    </source>
</evidence>
<evidence type="ECO:0000269" key="3">
    <source>
    </source>
</evidence>
<evidence type="ECO:0000269" key="4">
    <source>
    </source>
</evidence>
<evidence type="ECO:0000303" key="5">
    <source>
    </source>
</evidence>
<evidence type="ECO:0000305" key="6"/>
<evidence type="ECO:0000305" key="7">
    <source>
    </source>
</evidence>
<reference key="1">
    <citation type="journal article" date="2015" name="Genome Announc.">
        <title>Genome sequence of Aspergillus flavus NRRL 3357, a strain that causes aflatoxin contamination of food and feed.</title>
        <authorList>
            <person name="Nierman W.C."/>
            <person name="Yu J."/>
            <person name="Fedorova-Abrams N.D."/>
            <person name="Losada L."/>
            <person name="Cleveland T.E."/>
            <person name="Bhatnagar D."/>
            <person name="Bennett J.W."/>
            <person name="Dean R."/>
            <person name="Payne G.A."/>
        </authorList>
    </citation>
    <scope>NUCLEOTIDE SEQUENCE [LARGE SCALE GENOMIC DNA]</scope>
    <source>
        <strain>ATCC 200026 / FGSC A1120 / IAM 13836 / NRRL 3357 / JCM 12722 / SRRC 167</strain>
    </source>
</reference>
<reference key="2">
    <citation type="journal article" date="2014" name="Fungal Genet. Biol.">
        <title>Characterization of the biosynthetic gene cluster for the ribosomally synthesized cyclic peptide ustiloxin B in Aspergillus flavus.</title>
        <authorList>
            <person name="Umemura M."/>
            <person name="Nagano N."/>
            <person name="Koike H."/>
            <person name="Kawano J."/>
            <person name="Ishii T."/>
            <person name="Miyamura Y."/>
            <person name="Kikuchi M."/>
            <person name="Tamano K."/>
            <person name="Yu J."/>
            <person name="Shin-ya K."/>
            <person name="Machida M."/>
        </authorList>
    </citation>
    <scope>FUNCTION</scope>
    <scope>DISRUPTION PHENOTYPE</scope>
    <source>
        <strain>ATCC 200026 / FGSC A1120 / IAM 13836 / NRRL 3357 / JCM 12722 / SRRC 167</strain>
    </source>
</reference>
<reference key="3">
    <citation type="journal article" date="2016" name="Fungal Genet. Biol.">
        <title>Class of cyclic ribosomal peptide synthetic genes in filamentous fungi.</title>
        <authorList>
            <person name="Nagano N."/>
            <person name="Umemura M."/>
            <person name="Izumikawa M."/>
            <person name="Kawano J."/>
            <person name="Ishii T."/>
            <person name="Kikuchi M."/>
            <person name="Tomii K."/>
            <person name="Kumagai T."/>
            <person name="Yoshimi A."/>
            <person name="Machida M."/>
            <person name="Abe K."/>
            <person name="Shin-ya K."/>
            <person name="Asai K."/>
        </authorList>
    </citation>
    <scope>FUNCTION</scope>
    <scope>DISRUPTION PHENOTYPE</scope>
</reference>
<sequence length="588" mass="65643">MSGAQRRKTGCWTCRLRRKKCNEDGQPCSNCEARGVFCHGYGPKPSWKDRGEREREEAQRLQLISRARTRRARATPTNSINGEPRRPSIDMNTSDMGSPIQMGLGSSDSSIFETSSLDLLDIPELGSSLWEPTLDIIQVQPPPSDAPSALQFPSILGDGLEEKEIDLIMYYVVEVFPRQHSSYQGTSVMERSWLLCVLKRSSSFYYTSLSLSAHYRLMSMPEGGQGRTALLQEYERYKTCSLFRFQELVSSATRPQSPISTGVVGESVICGVQIAMLEAVSKNMQSSYLHLSSAALSLAQLLDNTSTLDSSSISTNTTPPSSVLTTDLYHAGSMEYKALRCFSIILIWNDILHCSAQQTIPAAAKTYQKLLADESFIPLFADIVGCEGWVLVPILEAMLLASWKKDQEAKGQLSIRELLTKVDHIESILGDRMKRLAPAVLRQKEAGISSQSPEQIRLVHTYIFAHASFVHLHTVVSGAQPSVPEIRQSIDKSLAAWQLLPPSLINFKTMAWPFCVCGSMAVGSQRELFQKIMSENFQNQSTSSNLHCLKSVVEECWKNFDKRVPEQSPSSYNWKVVMEKLNLSILFI</sequence>
<keyword id="KW-0238">DNA-binding</keyword>
<keyword id="KW-0479">Metal-binding</keyword>
<keyword id="KW-0539">Nucleus</keyword>
<keyword id="KW-0804">Transcription</keyword>
<keyword id="KW-0805">Transcription regulation</keyword>
<keyword id="KW-0862">Zinc</keyword>
<organism>
    <name type="scientific">Aspergillus flavus (strain ATCC 200026 / FGSC A1120 / IAM 13836 / NRRL 3357 / JCM 12722 / SRRC 167)</name>
    <dbReference type="NCBI Taxonomy" id="332952"/>
    <lineage>
        <taxon>Eukaryota</taxon>
        <taxon>Fungi</taxon>
        <taxon>Dikarya</taxon>
        <taxon>Ascomycota</taxon>
        <taxon>Pezizomycotina</taxon>
        <taxon>Eurotiomycetes</taxon>
        <taxon>Eurotiomycetidae</taxon>
        <taxon>Eurotiales</taxon>
        <taxon>Aspergillaceae</taxon>
        <taxon>Aspergillus</taxon>
        <taxon>Aspergillus subgen. Circumdati</taxon>
    </lineage>
</organism>
<protein>
    <recommendedName>
        <fullName evidence="5">ustiloxin B cluster transcription factor ustR</fullName>
    </recommendedName>
    <alternativeName>
        <fullName evidence="5">Ustiloxin B biosynthesis protein R</fullName>
    </alternativeName>
</protein>
<name>USTR_ASPFN</name>
<proteinExistence type="inferred from homology"/>
<comment type="function">
    <text evidence="3 7">Transcription factor that regulates the expression of the gene cluster that mediates the biosynthesis of ustiloxin B, an antimitotic tetrapeptide (PubMed:24841822, PubMed:26703898).</text>
</comment>
<comment type="subcellular location">
    <subcellularLocation>
        <location evidence="1">Nucleus</location>
    </subcellularLocation>
</comment>
<comment type="disruption phenotype">
    <text evidence="3 4">Impairs the production of ustiloxin B and its intermediate ustiloxin F (PubMed:24841822, PubMed:26703898).</text>
</comment>
<comment type="sequence caution" evidence="6">
    <conflict type="erroneous gene model prediction">
        <sequence resource="EMBL-CDS" id="EED49427"/>
    </conflict>
    <text>The predicted genes AFLA_095080 and AFLA_095090 have been merged into 1 gene: ustR.</text>
</comment>
<comment type="sequence caution" evidence="6">
    <conflict type="erroneous gene model prediction">
        <sequence resource="EMBL-CDS" id="EED49428"/>
    </conflict>
    <text>The predicted genes AFLA_095080 and AFLA_095090 have been merged into 1 gene: ustR.</text>
</comment>
<accession>B8NM76</accession>
<accession>B8NM77</accession>
<dbReference type="EMBL" id="EQ963480">
    <property type="protein sequence ID" value="EED49427.1"/>
    <property type="status" value="ALT_SEQ"/>
    <property type="molecule type" value="Genomic_DNA"/>
</dbReference>
<dbReference type="EMBL" id="EQ963480">
    <property type="protein sequence ID" value="EED49428.1"/>
    <property type="status" value="ALT_SEQ"/>
    <property type="molecule type" value="Genomic_DNA"/>
</dbReference>
<dbReference type="RefSeq" id="XP_002381328.1">
    <property type="nucleotide sequence ID" value="XM_002381287.1"/>
</dbReference>
<dbReference type="RefSeq" id="XP_002381329.1">
    <property type="nucleotide sequence ID" value="XM_002381288.1"/>
</dbReference>
<dbReference type="SMR" id="B8NM76"/>
<dbReference type="STRING" id="332952.B8NM76"/>
<dbReference type="VEuPathDB" id="FungiDB:AFLA_009746"/>
<dbReference type="HOGENOM" id="CLU_950472_0_0_1"/>
<dbReference type="GO" id="GO:0005634">
    <property type="term" value="C:nucleus"/>
    <property type="evidence" value="ECO:0007669"/>
    <property type="project" value="UniProtKB-SubCell"/>
</dbReference>
<dbReference type="GO" id="GO:0003677">
    <property type="term" value="F:DNA binding"/>
    <property type="evidence" value="ECO:0007669"/>
    <property type="project" value="UniProtKB-KW"/>
</dbReference>
<dbReference type="GO" id="GO:0000981">
    <property type="term" value="F:DNA-binding transcription factor activity, RNA polymerase II-specific"/>
    <property type="evidence" value="ECO:0007669"/>
    <property type="project" value="InterPro"/>
</dbReference>
<dbReference type="GO" id="GO:0008270">
    <property type="term" value="F:zinc ion binding"/>
    <property type="evidence" value="ECO:0007669"/>
    <property type="project" value="InterPro"/>
</dbReference>
<dbReference type="GO" id="GO:0009893">
    <property type="term" value="P:positive regulation of metabolic process"/>
    <property type="evidence" value="ECO:0007669"/>
    <property type="project" value="UniProtKB-ARBA"/>
</dbReference>
<dbReference type="CDD" id="cd00067">
    <property type="entry name" value="GAL4"/>
    <property type="match status" value="1"/>
</dbReference>
<dbReference type="Gene3D" id="4.10.240.10">
    <property type="entry name" value="Zn(2)-C6 fungal-type DNA-binding domain"/>
    <property type="match status" value="1"/>
</dbReference>
<dbReference type="InterPro" id="IPR021858">
    <property type="entry name" value="Fun_TF"/>
</dbReference>
<dbReference type="InterPro" id="IPR036864">
    <property type="entry name" value="Zn2-C6_fun-type_DNA-bd_sf"/>
</dbReference>
<dbReference type="InterPro" id="IPR001138">
    <property type="entry name" value="Zn2Cys6_DnaBD"/>
</dbReference>
<dbReference type="PANTHER" id="PTHR37534:SF20">
    <property type="entry name" value="PRO1A C6 ZINK-FINGER PROTEIN"/>
    <property type="match status" value="1"/>
</dbReference>
<dbReference type="PANTHER" id="PTHR37534">
    <property type="entry name" value="TRANSCRIPTIONAL ACTIVATOR PROTEIN UGA3"/>
    <property type="match status" value="1"/>
</dbReference>
<dbReference type="Pfam" id="PF11951">
    <property type="entry name" value="Fungal_trans_2"/>
    <property type="match status" value="1"/>
</dbReference>
<dbReference type="Pfam" id="PF00172">
    <property type="entry name" value="Zn_clus"/>
    <property type="match status" value="1"/>
</dbReference>
<dbReference type="SMART" id="SM00066">
    <property type="entry name" value="GAL4"/>
    <property type="match status" value="1"/>
</dbReference>
<dbReference type="SUPFAM" id="SSF57701">
    <property type="entry name" value="Zn2/Cys6 DNA-binding domain"/>
    <property type="match status" value="1"/>
</dbReference>
<dbReference type="PROSITE" id="PS00463">
    <property type="entry name" value="ZN2_CY6_FUNGAL_1"/>
    <property type="match status" value="1"/>
</dbReference>
<dbReference type="PROSITE" id="PS50048">
    <property type="entry name" value="ZN2_CY6_FUNGAL_2"/>
    <property type="match status" value="1"/>
</dbReference>
<gene>
    <name evidence="5" type="primary">ustR</name>
    <name type="ORF">AFLA_095080</name>
    <name type="ORF">AFLA_095090</name>
</gene>